<comment type="function">
    <text evidence="1">Prenyltransferase that catalyzes the transfer of the geranylgeranyl moiety of geranylgeranyl diphosphate (GGPP) to the C3 hydroxyl of sn-glycerol-1-phosphate (G1P). This reaction is the first ether-bond-formation step in the biosynthesis of archaeal membrane lipids.</text>
</comment>
<comment type="catalytic activity">
    <reaction evidence="1">
        <text>sn-glycerol 1-phosphate + (2E,6E,10E)-geranylgeranyl diphosphate = sn-3-O-(geranylgeranyl)glycerol 1-phosphate + diphosphate</text>
        <dbReference type="Rhea" id="RHEA:23404"/>
        <dbReference type="ChEBI" id="CHEBI:33019"/>
        <dbReference type="ChEBI" id="CHEBI:57677"/>
        <dbReference type="ChEBI" id="CHEBI:57685"/>
        <dbReference type="ChEBI" id="CHEBI:58756"/>
        <dbReference type="EC" id="2.5.1.41"/>
    </reaction>
</comment>
<comment type="cofactor">
    <cofactor evidence="1">
        <name>Mg(2+)</name>
        <dbReference type="ChEBI" id="CHEBI:18420"/>
    </cofactor>
</comment>
<comment type="pathway">
    <text evidence="1">Membrane lipid metabolism; glycerophospholipid metabolism.</text>
</comment>
<comment type="subcellular location">
    <subcellularLocation>
        <location evidence="1">Cytoplasm</location>
    </subcellularLocation>
</comment>
<comment type="similarity">
    <text evidence="1">Belongs to the GGGP/HepGP synthase family. Group II subfamily.</text>
</comment>
<evidence type="ECO:0000255" key="1">
    <source>
        <dbReference type="HAMAP-Rule" id="MF_00112"/>
    </source>
</evidence>
<dbReference type="EC" id="2.5.1.41" evidence="1"/>
<dbReference type="EMBL" id="CP000816">
    <property type="protein sequence ID" value="ABU81608.1"/>
    <property type="molecule type" value="Genomic_DNA"/>
</dbReference>
<dbReference type="RefSeq" id="WP_011998460.1">
    <property type="nucleotide sequence ID" value="NC_009776.1"/>
</dbReference>
<dbReference type="SMR" id="A8A9K6"/>
<dbReference type="STRING" id="453591.Igni_0425"/>
<dbReference type="GeneID" id="5562959"/>
<dbReference type="KEGG" id="iho:Igni_0425"/>
<dbReference type="eggNOG" id="arCOG01085">
    <property type="taxonomic scope" value="Archaea"/>
</dbReference>
<dbReference type="HOGENOM" id="CLU_068610_0_0_2"/>
<dbReference type="OrthoDB" id="7409at2157"/>
<dbReference type="PhylomeDB" id="A8A9K6"/>
<dbReference type="UniPathway" id="UPA00940"/>
<dbReference type="Proteomes" id="UP000000262">
    <property type="component" value="Chromosome"/>
</dbReference>
<dbReference type="GO" id="GO:0005737">
    <property type="term" value="C:cytoplasm"/>
    <property type="evidence" value="ECO:0007669"/>
    <property type="project" value="UniProtKB-SubCell"/>
</dbReference>
<dbReference type="GO" id="GO:0000287">
    <property type="term" value="F:magnesium ion binding"/>
    <property type="evidence" value="ECO:0007669"/>
    <property type="project" value="UniProtKB-UniRule"/>
</dbReference>
<dbReference type="GO" id="GO:0047294">
    <property type="term" value="F:phosphoglycerol geranylgeranyltransferase activity"/>
    <property type="evidence" value="ECO:0007669"/>
    <property type="project" value="UniProtKB-UniRule"/>
</dbReference>
<dbReference type="GO" id="GO:0046474">
    <property type="term" value="P:glycerophospholipid biosynthetic process"/>
    <property type="evidence" value="ECO:0007669"/>
    <property type="project" value="UniProtKB-UniRule"/>
</dbReference>
<dbReference type="CDD" id="cd02812">
    <property type="entry name" value="PcrB_like"/>
    <property type="match status" value="1"/>
</dbReference>
<dbReference type="Gene3D" id="3.20.20.390">
    <property type="entry name" value="FMN-linked oxidoreductases"/>
    <property type="match status" value="1"/>
</dbReference>
<dbReference type="HAMAP" id="MF_00112">
    <property type="entry name" value="GGGP_HepGP_synthase"/>
    <property type="match status" value="1"/>
</dbReference>
<dbReference type="InterPro" id="IPR039074">
    <property type="entry name" value="GGGP/HepGP_synthase_I"/>
</dbReference>
<dbReference type="InterPro" id="IPR038597">
    <property type="entry name" value="GGGP/HepGP_synthase_sf"/>
</dbReference>
<dbReference type="InterPro" id="IPR008205">
    <property type="entry name" value="GGGP_HepGP_synthase"/>
</dbReference>
<dbReference type="InterPro" id="IPR010946">
    <property type="entry name" value="GGGP_synth"/>
</dbReference>
<dbReference type="NCBIfam" id="TIGR01769">
    <property type="entry name" value="GGGP"/>
    <property type="match status" value="1"/>
</dbReference>
<dbReference type="NCBIfam" id="TIGR01768">
    <property type="entry name" value="GGGP-family"/>
    <property type="match status" value="1"/>
</dbReference>
<dbReference type="NCBIfam" id="NF003198">
    <property type="entry name" value="PRK04169.1-2"/>
    <property type="match status" value="1"/>
</dbReference>
<dbReference type="PANTHER" id="PTHR40029">
    <property type="match status" value="1"/>
</dbReference>
<dbReference type="PANTHER" id="PTHR40029:SF2">
    <property type="entry name" value="HEPTAPRENYLGLYCERYL PHOSPHATE SYNTHASE"/>
    <property type="match status" value="1"/>
</dbReference>
<dbReference type="Pfam" id="PF01884">
    <property type="entry name" value="PcrB"/>
    <property type="match status" value="1"/>
</dbReference>
<dbReference type="SUPFAM" id="SSF51395">
    <property type="entry name" value="FMN-linked oxidoreductases"/>
    <property type="match status" value="1"/>
</dbReference>
<name>GGGPS_IGNH4</name>
<gene>
    <name type="ordered locus">Igni_0425</name>
</gene>
<accession>A8A9K6</accession>
<protein>
    <recommendedName>
        <fullName evidence="1">Geranylgeranylglyceryl phosphate synthase</fullName>
        <shortName evidence="1">GGGP synthase</shortName>
        <shortName evidence="1">GGGPS</shortName>
        <ecNumber evidence="1">2.5.1.41</ecNumber>
    </recommendedName>
    <alternativeName>
        <fullName evidence="1">(S)-3-O-geranylgeranylglyceryl phosphate synthase</fullName>
    </alternativeName>
    <alternativeName>
        <fullName evidence="1">Phosphoglycerol geranylgeranyltransferase</fullName>
    </alternativeName>
</protein>
<keyword id="KW-0963">Cytoplasm</keyword>
<keyword id="KW-0444">Lipid biosynthesis</keyword>
<keyword id="KW-0443">Lipid metabolism</keyword>
<keyword id="KW-0460">Magnesium</keyword>
<keyword id="KW-0479">Metal-binding</keyword>
<keyword id="KW-0594">Phospholipid biosynthesis</keyword>
<keyword id="KW-1208">Phospholipid metabolism</keyword>
<keyword id="KW-1185">Reference proteome</keyword>
<keyword id="KW-0808">Transferase</keyword>
<proteinExistence type="inferred from homology"/>
<organism>
    <name type="scientific">Ignicoccus hospitalis (strain KIN4/I / DSM 18386 / JCM 14125)</name>
    <dbReference type="NCBI Taxonomy" id="453591"/>
    <lineage>
        <taxon>Archaea</taxon>
        <taxon>Thermoproteota</taxon>
        <taxon>Thermoprotei</taxon>
        <taxon>Desulfurococcales</taxon>
        <taxon>Desulfurococcaceae</taxon>
        <taxon>Ignicoccus</taxon>
    </lineage>
</organism>
<reference key="1">
    <citation type="journal article" date="2008" name="Genome Biol.">
        <title>A genomic analysis of the archaeal system Ignicoccus hospitalis-Nanoarchaeum equitans.</title>
        <authorList>
            <person name="Podar M."/>
            <person name="Anderson I."/>
            <person name="Makarova K.S."/>
            <person name="Elkins J.G."/>
            <person name="Ivanova N."/>
            <person name="Wall M.A."/>
            <person name="Lykidis A."/>
            <person name="Mavromatis K."/>
            <person name="Sun H."/>
            <person name="Hudson M.E."/>
            <person name="Chen W."/>
            <person name="Deciu C."/>
            <person name="Hutchison D."/>
            <person name="Eads J.R."/>
            <person name="Anderson A."/>
            <person name="Fernandes F."/>
            <person name="Szeto E."/>
            <person name="Lapidus A."/>
            <person name="Kyrpides N.C."/>
            <person name="Saier M.H. Jr."/>
            <person name="Richardson P.M."/>
            <person name="Rachel R."/>
            <person name="Huber H."/>
            <person name="Eisen J.A."/>
            <person name="Koonin E.V."/>
            <person name="Keller M."/>
            <person name="Stetter K.O."/>
        </authorList>
    </citation>
    <scope>NUCLEOTIDE SEQUENCE [LARGE SCALE GENOMIC DNA]</scope>
    <source>
        <strain>KIN4/I / DSM 18386 / JCM 14125</strain>
    </source>
</reference>
<sequence>MGAYDELMKRRGRALLPLLDPDKVISEEDYYERAVKALCEYAATFLVGGSTGVGQIETEKTVALVKKNCDKPVTVFPGSPCQVAPSADAILFMSLLNSTNRKYLIDYQLEGSLLVYRYGLEAIPTAYIIVGEGGTAGWVGEAKAIPPEKPELLSMYVLAAKYLGFKVVYLEAGSGVKRSVPPEAVRLAKKLLGEEVILIVGGGIKDEEVAAEILRAGADGVVVGTVVERDLSAAERIARRVAGWT</sequence>
<feature type="chain" id="PRO_0000350676" description="Geranylgeranylglyceryl phosphate synthase">
    <location>
        <begin position="1"/>
        <end position="245"/>
    </location>
</feature>
<feature type="binding site" evidence="1">
    <location>
        <position position="20"/>
    </location>
    <ligand>
        <name>Mg(2+)</name>
        <dbReference type="ChEBI" id="CHEBI:18420"/>
    </ligand>
</feature>
<feature type="binding site" evidence="1">
    <location>
        <position position="50"/>
    </location>
    <ligand>
        <name>Mg(2+)</name>
        <dbReference type="ChEBI" id="CHEBI:18420"/>
    </ligand>
</feature>
<feature type="binding site" evidence="1">
    <location>
        <begin position="169"/>
        <end position="175"/>
    </location>
    <ligand>
        <name>sn-glycerol 1-phosphate</name>
        <dbReference type="ChEBI" id="CHEBI:57685"/>
    </ligand>
</feature>
<feature type="binding site" evidence="1">
    <location>
        <begin position="202"/>
        <end position="203"/>
    </location>
    <ligand>
        <name>sn-glycerol 1-phosphate</name>
        <dbReference type="ChEBI" id="CHEBI:57685"/>
    </ligand>
</feature>
<feature type="binding site" evidence="1">
    <location>
        <begin position="224"/>
        <end position="225"/>
    </location>
    <ligand>
        <name>sn-glycerol 1-phosphate</name>
        <dbReference type="ChEBI" id="CHEBI:57685"/>
    </ligand>
</feature>